<dbReference type="EMBL" id="X17403">
    <property type="protein sequence ID" value="CAA35416.1"/>
    <property type="molecule type" value="Genomic_DNA"/>
</dbReference>
<dbReference type="EMBL" id="BK000394">
    <property type="protein sequence ID" value="DAA00120.1"/>
    <property type="molecule type" value="Genomic_DNA"/>
</dbReference>
<dbReference type="PIR" id="S09780">
    <property type="entry name" value="S09780"/>
</dbReference>
<dbReference type="RefSeq" id="YP_081476.1">
    <property type="nucleotide sequence ID" value="NC_006273.2"/>
</dbReference>
<dbReference type="DNASU" id="3077497"/>
<dbReference type="GeneID" id="3077497"/>
<dbReference type="KEGG" id="vg:3077497"/>
<dbReference type="Proteomes" id="UP000008991">
    <property type="component" value="Segment"/>
</dbReference>
<dbReference type="Proteomes" id="UP000008992">
    <property type="component" value="Segment"/>
</dbReference>
<dbReference type="InterPro" id="IPR020527">
    <property type="entry name" value="Cytomegalovir_UL17"/>
</dbReference>
<dbReference type="Pfam" id="PF17640">
    <property type="entry name" value="UL17"/>
    <property type="match status" value="1"/>
</dbReference>
<organismHost>
    <name type="scientific">Homo sapiens</name>
    <name type="common">Human</name>
    <dbReference type="NCBI Taxonomy" id="9606"/>
</organismHost>
<name>UL17_HCMVA</name>
<reference key="1">
    <citation type="journal article" date="1990" name="Curr. Top. Microbiol. Immunol.">
        <title>Analysis of the protein-coding content of the sequence of human cytomegalovirus strain AD169.</title>
        <authorList>
            <person name="Chee M.S."/>
            <person name="Bankier A.T."/>
            <person name="Beck S."/>
            <person name="Bohni R."/>
            <person name="Brown C.M."/>
            <person name="Cerny R."/>
            <person name="Horsnell T."/>
            <person name="Hutchison C.A. III"/>
            <person name="Kouzarides T."/>
            <person name="Martignetti J.A."/>
            <person name="Preddie E."/>
            <person name="Satchwell S.C."/>
            <person name="Tomlinson P."/>
            <person name="Weston K.M."/>
            <person name="Barrell B.G."/>
        </authorList>
    </citation>
    <scope>NUCLEOTIDE SEQUENCE [LARGE SCALE GENOMIC DNA]</scope>
</reference>
<reference key="2">
    <citation type="journal article" date="2003" name="J. Gen. Virol.">
        <title>The human cytomegalovirus genome revisited: comparison with the chimpanzee cytomegalovirus genome.</title>
        <authorList>
            <person name="Davison A.J."/>
            <person name="Dolan A."/>
            <person name="Akter P."/>
            <person name="Addison C."/>
            <person name="Dargan D.J."/>
            <person name="Alcendor D.J."/>
            <person name="McGeoch D.J."/>
            <person name="Hayward G.S."/>
        </authorList>
    </citation>
    <scope>GENOME REANNOTATION</scope>
</reference>
<reference key="3">
    <citation type="journal article" date="2003" name="J. Gen. Virol.">
        <authorList>
            <person name="Davison A.J."/>
            <person name="Dolan A."/>
            <person name="Akter P."/>
            <person name="Addison C."/>
            <person name="Dargan D.J."/>
            <person name="Alcendor D.J."/>
            <person name="McGeoch D.J."/>
            <person name="Hayward G.S."/>
        </authorList>
    </citation>
    <scope>ERRATUM OF PUBMED:12533697</scope>
</reference>
<accession>P16722</accession>
<accession>Q7M6R6</accession>
<protein>
    <recommendedName>
        <fullName>Uncharacterized protein UL17</fullName>
    </recommendedName>
</protein>
<sequence length="104" mass="12672">MDHALFTHFVGRPRHCRLEMLILDEQVSKRSWDTTVYHRRRKHLPRRRAPCGPQRPAEIPKRRKKAAVLLFWHDLCWLFRRLFFPREDSEPLMSDPARSPEEEE</sequence>
<gene>
    <name type="primary">UL17</name>
</gene>
<proteinExistence type="predicted"/>
<keyword id="KW-1185">Reference proteome</keyword>
<organism>
    <name type="scientific">Human cytomegalovirus (strain AD169)</name>
    <name type="common">HHV-5</name>
    <name type="synonym">Human herpesvirus 5</name>
    <dbReference type="NCBI Taxonomy" id="10360"/>
    <lineage>
        <taxon>Viruses</taxon>
        <taxon>Duplodnaviria</taxon>
        <taxon>Heunggongvirae</taxon>
        <taxon>Peploviricota</taxon>
        <taxon>Herviviricetes</taxon>
        <taxon>Herpesvirales</taxon>
        <taxon>Orthoherpesviridae</taxon>
        <taxon>Betaherpesvirinae</taxon>
        <taxon>Cytomegalovirus</taxon>
        <taxon>Cytomegalovirus humanbeta5</taxon>
        <taxon>Human cytomegalovirus</taxon>
    </lineage>
</organism>
<feature type="chain" id="PRO_0000115310" description="Uncharacterized protein UL17">
    <location>
        <begin position="1"/>
        <end position="104"/>
    </location>
</feature>